<proteinExistence type="inferred from homology"/>
<gene>
    <name evidence="1" type="primary">glmS</name>
    <name type="ordered locus">BMEII0685</name>
</gene>
<keyword id="KW-0032">Aminotransferase</keyword>
<keyword id="KW-0963">Cytoplasm</keyword>
<keyword id="KW-0315">Glutamine amidotransferase</keyword>
<keyword id="KW-0677">Repeat</keyword>
<keyword id="KW-0808">Transferase</keyword>
<comment type="function">
    <text evidence="1">Catalyzes the first step in hexosamine metabolism, converting fructose-6P into glucosamine-6P using glutamine as a nitrogen source.</text>
</comment>
<comment type="catalytic activity">
    <reaction evidence="1">
        <text>D-fructose 6-phosphate + L-glutamine = D-glucosamine 6-phosphate + L-glutamate</text>
        <dbReference type="Rhea" id="RHEA:13237"/>
        <dbReference type="ChEBI" id="CHEBI:29985"/>
        <dbReference type="ChEBI" id="CHEBI:58359"/>
        <dbReference type="ChEBI" id="CHEBI:58725"/>
        <dbReference type="ChEBI" id="CHEBI:61527"/>
        <dbReference type="EC" id="2.6.1.16"/>
    </reaction>
</comment>
<comment type="subunit">
    <text evidence="1">Homodimer.</text>
</comment>
<comment type="subcellular location">
    <subcellularLocation>
        <location evidence="1">Cytoplasm</location>
    </subcellularLocation>
</comment>
<comment type="sequence caution" evidence="2">
    <conflict type="erroneous initiation">
        <sequence resource="EMBL-CDS" id="AAL53927"/>
    </conflict>
</comment>
<evidence type="ECO:0000255" key="1">
    <source>
        <dbReference type="HAMAP-Rule" id="MF_00164"/>
    </source>
</evidence>
<evidence type="ECO:0000305" key="2"/>
<reference key="1">
    <citation type="journal article" date="2002" name="Proc. Natl. Acad. Sci. U.S.A.">
        <title>The genome sequence of the facultative intracellular pathogen Brucella melitensis.</title>
        <authorList>
            <person name="DelVecchio V.G."/>
            <person name="Kapatral V."/>
            <person name="Redkar R.J."/>
            <person name="Patra G."/>
            <person name="Mujer C."/>
            <person name="Los T."/>
            <person name="Ivanova N."/>
            <person name="Anderson I."/>
            <person name="Bhattacharyya A."/>
            <person name="Lykidis A."/>
            <person name="Reznik G."/>
            <person name="Jablonski L."/>
            <person name="Larsen N."/>
            <person name="D'Souza M."/>
            <person name="Bernal A."/>
            <person name="Mazur M."/>
            <person name="Goltsman E."/>
            <person name="Selkov E."/>
            <person name="Elzer P.H."/>
            <person name="Hagius S."/>
            <person name="O'Callaghan D."/>
            <person name="Letesson J.-J."/>
            <person name="Haselkorn R."/>
            <person name="Kyrpides N.C."/>
            <person name="Overbeek R."/>
        </authorList>
    </citation>
    <scope>NUCLEOTIDE SEQUENCE [LARGE SCALE GENOMIC DNA]</scope>
    <source>
        <strain>ATCC 23456 / CCUG 17765 / NCTC 10094 / 16M</strain>
    </source>
</reference>
<name>GLMS_BRUME</name>
<feature type="initiator methionine" description="Removed" evidence="1">
    <location>
        <position position="1"/>
    </location>
</feature>
<feature type="chain" id="PRO_0000135309" description="Glutamine--fructose-6-phosphate aminotransferase [isomerizing]">
    <location>
        <begin position="2"/>
        <end position="607"/>
    </location>
</feature>
<feature type="domain" description="Glutamine amidotransferase type-2" evidence="1">
    <location>
        <begin position="2"/>
        <end position="217"/>
    </location>
</feature>
<feature type="domain" description="SIS 1" evidence="1">
    <location>
        <begin position="283"/>
        <end position="422"/>
    </location>
</feature>
<feature type="domain" description="SIS 2" evidence="1">
    <location>
        <begin position="455"/>
        <end position="597"/>
    </location>
</feature>
<feature type="active site" description="Nucleophile; for GATase activity" evidence="1">
    <location>
        <position position="2"/>
    </location>
</feature>
<feature type="active site" description="For Fru-6P isomerization activity" evidence="1">
    <location>
        <position position="602"/>
    </location>
</feature>
<protein>
    <recommendedName>
        <fullName evidence="1">Glutamine--fructose-6-phosphate aminotransferase [isomerizing]</fullName>
        <ecNumber evidence="1">2.6.1.16</ecNumber>
    </recommendedName>
    <alternativeName>
        <fullName evidence="1">D-fructose-6-phosphate amidotransferase</fullName>
    </alternativeName>
    <alternativeName>
        <fullName evidence="1">GFAT</fullName>
    </alternativeName>
    <alternativeName>
        <fullName evidence="1">Glucosamine-6-phosphate synthase</fullName>
    </alternativeName>
    <alternativeName>
        <fullName evidence="1">Hexosephosphate aminotransferase</fullName>
    </alternativeName>
    <alternativeName>
        <fullName evidence="1">L-glutamine--D-fructose-6-phosphate amidotransferase</fullName>
    </alternativeName>
</protein>
<accession>Q8YC47</accession>
<sequence>MCGIIGIIGNDEVAPRLVDALKRLEYRGYDSAGIATLQNGRLDRRRAEGKLVNLEKRLAGEPLPGVIGIGHTRWATHGRPVEHNAHPHITTRLAVVHNGIIENFAELRAMLEAEGRKFETETDTEAVAHLVTRELEKGKSPVEAVRDCLPHLKGAFALAFLFEGDEELLIGARQGPPLAVGYGEGEMFLGSDAIALAPFTDTISYLEDGDWAVLTRNGVSIYDENNKPVERPVQKSQNTNMLVSKGNHRHFMQKEMFEQPEVISHTLANYLDFTTGKVRKEAIGIDFSKVDRLTITACGTAYYAATVAKYWFEQIARLPVDSDIASEFRYREMPLSKDSLAMFVSQSGETADTLASLRYCKAQGLKIASVLNVTGSTIARESDAVFPTLAGPEIGVASTKAFTCQLSAMASLAIAAARARGAIDEVREQELVHQLSEAPRFINQVLKLEDQIAVVCHDLSKVNHVLYLGRGTSFPLAMEGALKLKEISYIHAEGYAAGELKHGPIALIDETMPVIVIAPSDRLYEKTVSNMQEVAARGGRIILITDKKGAESASIDTMATIVLPEVPEFISPLVYALPIQMLAYHTAVLMGTDVDQPRNLAKSVTVE</sequence>
<organism>
    <name type="scientific">Brucella melitensis biotype 1 (strain ATCC 23456 / CCUG 17765 / NCTC 10094 / 16M)</name>
    <dbReference type="NCBI Taxonomy" id="224914"/>
    <lineage>
        <taxon>Bacteria</taxon>
        <taxon>Pseudomonadati</taxon>
        <taxon>Pseudomonadota</taxon>
        <taxon>Alphaproteobacteria</taxon>
        <taxon>Hyphomicrobiales</taxon>
        <taxon>Brucellaceae</taxon>
        <taxon>Brucella/Ochrobactrum group</taxon>
        <taxon>Brucella</taxon>
    </lineage>
</organism>
<dbReference type="EC" id="2.6.1.16" evidence="1"/>
<dbReference type="EMBL" id="AE008918">
    <property type="protein sequence ID" value="AAL53927.1"/>
    <property type="status" value="ALT_INIT"/>
    <property type="molecule type" value="Genomic_DNA"/>
</dbReference>
<dbReference type="PIR" id="AD3595">
    <property type="entry name" value="AD3595"/>
</dbReference>
<dbReference type="RefSeq" id="WP_004684961.1">
    <property type="nucleotide sequence ID" value="NZ_GG703779.1"/>
</dbReference>
<dbReference type="SMR" id="Q8YC47"/>
<dbReference type="GeneID" id="29595126"/>
<dbReference type="KEGG" id="bme:BMEII0685"/>
<dbReference type="KEGG" id="bmel:DK63_2556"/>
<dbReference type="PATRIC" id="fig|224914.52.peg.2679"/>
<dbReference type="eggNOG" id="COG0449">
    <property type="taxonomic scope" value="Bacteria"/>
</dbReference>
<dbReference type="PhylomeDB" id="Q8YC47"/>
<dbReference type="Proteomes" id="UP000000419">
    <property type="component" value="Chromosome II"/>
</dbReference>
<dbReference type="GO" id="GO:0005829">
    <property type="term" value="C:cytosol"/>
    <property type="evidence" value="ECO:0007669"/>
    <property type="project" value="TreeGrafter"/>
</dbReference>
<dbReference type="GO" id="GO:0097367">
    <property type="term" value="F:carbohydrate derivative binding"/>
    <property type="evidence" value="ECO:0007669"/>
    <property type="project" value="InterPro"/>
</dbReference>
<dbReference type="GO" id="GO:0004360">
    <property type="term" value="F:glutamine-fructose-6-phosphate transaminase (isomerizing) activity"/>
    <property type="evidence" value="ECO:0007669"/>
    <property type="project" value="UniProtKB-UniRule"/>
</dbReference>
<dbReference type="GO" id="GO:0005975">
    <property type="term" value="P:carbohydrate metabolic process"/>
    <property type="evidence" value="ECO:0007669"/>
    <property type="project" value="UniProtKB-UniRule"/>
</dbReference>
<dbReference type="GO" id="GO:0006002">
    <property type="term" value="P:fructose 6-phosphate metabolic process"/>
    <property type="evidence" value="ECO:0007669"/>
    <property type="project" value="TreeGrafter"/>
</dbReference>
<dbReference type="GO" id="GO:0006487">
    <property type="term" value="P:protein N-linked glycosylation"/>
    <property type="evidence" value="ECO:0007669"/>
    <property type="project" value="TreeGrafter"/>
</dbReference>
<dbReference type="GO" id="GO:0006047">
    <property type="term" value="P:UDP-N-acetylglucosamine metabolic process"/>
    <property type="evidence" value="ECO:0007669"/>
    <property type="project" value="TreeGrafter"/>
</dbReference>
<dbReference type="CDD" id="cd00714">
    <property type="entry name" value="GFAT"/>
    <property type="match status" value="1"/>
</dbReference>
<dbReference type="CDD" id="cd05008">
    <property type="entry name" value="SIS_GlmS_GlmD_1"/>
    <property type="match status" value="1"/>
</dbReference>
<dbReference type="CDD" id="cd05009">
    <property type="entry name" value="SIS_GlmS_GlmD_2"/>
    <property type="match status" value="1"/>
</dbReference>
<dbReference type="FunFam" id="3.40.50.10490:FF:000001">
    <property type="entry name" value="Glutamine--fructose-6-phosphate aminotransferase [isomerizing]"/>
    <property type="match status" value="1"/>
</dbReference>
<dbReference type="FunFam" id="3.40.50.10490:FF:000002">
    <property type="entry name" value="Glutamine--fructose-6-phosphate aminotransferase [isomerizing]"/>
    <property type="match status" value="1"/>
</dbReference>
<dbReference type="FunFam" id="3.60.20.10:FF:000006">
    <property type="entry name" value="Glutamine--fructose-6-phosphate aminotransferase [isomerizing]"/>
    <property type="match status" value="1"/>
</dbReference>
<dbReference type="Gene3D" id="3.40.50.10490">
    <property type="entry name" value="Glucose-6-phosphate isomerase like protein, domain 1"/>
    <property type="match status" value="2"/>
</dbReference>
<dbReference type="Gene3D" id="3.60.20.10">
    <property type="entry name" value="Glutamine Phosphoribosylpyrophosphate, subunit 1, domain 1"/>
    <property type="match status" value="1"/>
</dbReference>
<dbReference type="HAMAP" id="MF_00164">
    <property type="entry name" value="GlmS"/>
    <property type="match status" value="1"/>
</dbReference>
<dbReference type="InterPro" id="IPR017932">
    <property type="entry name" value="GATase_2_dom"/>
</dbReference>
<dbReference type="InterPro" id="IPR005855">
    <property type="entry name" value="GFAT"/>
</dbReference>
<dbReference type="InterPro" id="IPR047084">
    <property type="entry name" value="GFAT_N"/>
</dbReference>
<dbReference type="InterPro" id="IPR035466">
    <property type="entry name" value="GlmS/AgaS_SIS"/>
</dbReference>
<dbReference type="InterPro" id="IPR035490">
    <property type="entry name" value="GlmS/FrlB_SIS"/>
</dbReference>
<dbReference type="InterPro" id="IPR029055">
    <property type="entry name" value="Ntn_hydrolases_N"/>
</dbReference>
<dbReference type="InterPro" id="IPR001347">
    <property type="entry name" value="SIS_dom"/>
</dbReference>
<dbReference type="InterPro" id="IPR046348">
    <property type="entry name" value="SIS_dom_sf"/>
</dbReference>
<dbReference type="NCBIfam" id="TIGR01135">
    <property type="entry name" value="glmS"/>
    <property type="match status" value="1"/>
</dbReference>
<dbReference type="NCBIfam" id="NF001484">
    <property type="entry name" value="PRK00331.1"/>
    <property type="match status" value="1"/>
</dbReference>
<dbReference type="PANTHER" id="PTHR10937">
    <property type="entry name" value="GLUCOSAMINE--FRUCTOSE-6-PHOSPHATE AMINOTRANSFERASE, ISOMERIZING"/>
    <property type="match status" value="1"/>
</dbReference>
<dbReference type="PANTHER" id="PTHR10937:SF0">
    <property type="entry name" value="GLUTAMINE--FRUCTOSE-6-PHOSPHATE TRANSAMINASE (ISOMERIZING)"/>
    <property type="match status" value="1"/>
</dbReference>
<dbReference type="Pfam" id="PF13522">
    <property type="entry name" value="GATase_6"/>
    <property type="match status" value="1"/>
</dbReference>
<dbReference type="Pfam" id="PF01380">
    <property type="entry name" value="SIS"/>
    <property type="match status" value="2"/>
</dbReference>
<dbReference type="SUPFAM" id="SSF56235">
    <property type="entry name" value="N-terminal nucleophile aminohydrolases (Ntn hydrolases)"/>
    <property type="match status" value="1"/>
</dbReference>
<dbReference type="SUPFAM" id="SSF53697">
    <property type="entry name" value="SIS domain"/>
    <property type="match status" value="1"/>
</dbReference>
<dbReference type="PROSITE" id="PS51278">
    <property type="entry name" value="GATASE_TYPE_2"/>
    <property type="match status" value="1"/>
</dbReference>
<dbReference type="PROSITE" id="PS51464">
    <property type="entry name" value="SIS"/>
    <property type="match status" value="2"/>
</dbReference>